<protein>
    <recommendedName>
        <fullName evidence="1">Phosphate acyltransferase</fullName>
        <ecNumber evidence="1">2.3.1.274</ecNumber>
    </recommendedName>
    <alternativeName>
        <fullName evidence="1">Acyl-ACP phosphotransacylase</fullName>
    </alternativeName>
    <alternativeName>
        <fullName evidence="1">Acyl-[acyl-carrier-protein]--phosphate acyltransferase</fullName>
    </alternativeName>
    <alternativeName>
        <fullName evidence="1">Phosphate-acyl-ACP acyltransferase</fullName>
    </alternativeName>
</protein>
<comment type="function">
    <text evidence="1">Catalyzes the reversible formation of acyl-phosphate (acyl-PO(4)) from acyl-[acyl-carrier-protein] (acyl-ACP). This enzyme utilizes acyl-ACP as fatty acyl donor, but not acyl-CoA.</text>
</comment>
<comment type="catalytic activity">
    <reaction evidence="1">
        <text>a fatty acyl-[ACP] + phosphate = an acyl phosphate + holo-[ACP]</text>
        <dbReference type="Rhea" id="RHEA:42292"/>
        <dbReference type="Rhea" id="RHEA-COMP:9685"/>
        <dbReference type="Rhea" id="RHEA-COMP:14125"/>
        <dbReference type="ChEBI" id="CHEBI:43474"/>
        <dbReference type="ChEBI" id="CHEBI:59918"/>
        <dbReference type="ChEBI" id="CHEBI:64479"/>
        <dbReference type="ChEBI" id="CHEBI:138651"/>
        <dbReference type="EC" id="2.3.1.274"/>
    </reaction>
</comment>
<comment type="pathway">
    <text evidence="1">Lipid metabolism; phospholipid metabolism.</text>
</comment>
<comment type="subunit">
    <text evidence="1">Homodimer. Probably interacts with PlsY.</text>
</comment>
<comment type="subcellular location">
    <subcellularLocation>
        <location evidence="1">Cytoplasm</location>
    </subcellularLocation>
    <text evidence="1">Associated with the membrane possibly through PlsY.</text>
</comment>
<comment type="similarity">
    <text evidence="1">Belongs to the PlsX family.</text>
</comment>
<keyword id="KW-0963">Cytoplasm</keyword>
<keyword id="KW-0444">Lipid biosynthesis</keyword>
<keyword id="KW-0443">Lipid metabolism</keyword>
<keyword id="KW-0594">Phospholipid biosynthesis</keyword>
<keyword id="KW-1208">Phospholipid metabolism</keyword>
<keyword id="KW-1185">Reference proteome</keyword>
<keyword id="KW-0808">Transferase</keyword>
<reference key="1">
    <citation type="journal article" date="2002" name="DNA Res.">
        <title>Complete genome structure of the thermophilic cyanobacterium Thermosynechococcus elongatus BP-1.</title>
        <authorList>
            <person name="Nakamura Y."/>
            <person name="Kaneko T."/>
            <person name="Sato S."/>
            <person name="Ikeuchi M."/>
            <person name="Katoh H."/>
            <person name="Sasamoto S."/>
            <person name="Watanabe A."/>
            <person name="Iriguchi M."/>
            <person name="Kawashima K."/>
            <person name="Kimura T."/>
            <person name="Kishida Y."/>
            <person name="Kiyokawa C."/>
            <person name="Kohara M."/>
            <person name="Matsumoto M."/>
            <person name="Matsuno A."/>
            <person name="Nakazaki N."/>
            <person name="Shimpo S."/>
            <person name="Sugimoto M."/>
            <person name="Takeuchi C."/>
            <person name="Yamada M."/>
            <person name="Tabata S."/>
        </authorList>
    </citation>
    <scope>NUCLEOTIDE SEQUENCE [LARGE SCALE GENOMIC DNA]</scope>
    <source>
        <strain>NIES-2133 / IAM M-273 / BP-1</strain>
    </source>
</reference>
<dbReference type="EC" id="2.3.1.274" evidence="1"/>
<dbReference type="EMBL" id="BA000039">
    <property type="protein sequence ID" value="BAC08396.1"/>
    <property type="molecule type" value="Genomic_DNA"/>
</dbReference>
<dbReference type="RefSeq" id="NP_681634.2">
    <property type="nucleotide sequence ID" value="NC_004113.1"/>
</dbReference>
<dbReference type="SMR" id="Q8DKL5"/>
<dbReference type="STRING" id="197221.gene:10747436"/>
<dbReference type="EnsemblBacteria" id="BAC08396">
    <property type="protein sequence ID" value="BAC08396"/>
    <property type="gene ID" value="BAC08396"/>
</dbReference>
<dbReference type="KEGG" id="tel:tlr0844"/>
<dbReference type="PATRIC" id="fig|197221.4.peg.889"/>
<dbReference type="eggNOG" id="COG0416">
    <property type="taxonomic scope" value="Bacteria"/>
</dbReference>
<dbReference type="UniPathway" id="UPA00085"/>
<dbReference type="Proteomes" id="UP000000440">
    <property type="component" value="Chromosome"/>
</dbReference>
<dbReference type="GO" id="GO:0005737">
    <property type="term" value="C:cytoplasm"/>
    <property type="evidence" value="ECO:0007669"/>
    <property type="project" value="UniProtKB-SubCell"/>
</dbReference>
<dbReference type="GO" id="GO:0043811">
    <property type="term" value="F:phosphate:acyl-[acyl carrier protein] acyltransferase activity"/>
    <property type="evidence" value="ECO:0007669"/>
    <property type="project" value="UniProtKB-UniRule"/>
</dbReference>
<dbReference type="GO" id="GO:0006633">
    <property type="term" value="P:fatty acid biosynthetic process"/>
    <property type="evidence" value="ECO:0007669"/>
    <property type="project" value="UniProtKB-UniRule"/>
</dbReference>
<dbReference type="GO" id="GO:0008654">
    <property type="term" value="P:phospholipid biosynthetic process"/>
    <property type="evidence" value="ECO:0007669"/>
    <property type="project" value="UniProtKB-KW"/>
</dbReference>
<dbReference type="Gene3D" id="3.40.718.10">
    <property type="entry name" value="Isopropylmalate Dehydrogenase"/>
    <property type="match status" value="1"/>
</dbReference>
<dbReference type="HAMAP" id="MF_00019">
    <property type="entry name" value="PlsX"/>
    <property type="match status" value="1"/>
</dbReference>
<dbReference type="InterPro" id="IPR003664">
    <property type="entry name" value="FA_synthesis"/>
</dbReference>
<dbReference type="InterPro" id="IPR012281">
    <property type="entry name" value="Phospholipid_synth_PlsX-like"/>
</dbReference>
<dbReference type="NCBIfam" id="TIGR00182">
    <property type="entry name" value="plsX"/>
    <property type="match status" value="1"/>
</dbReference>
<dbReference type="PANTHER" id="PTHR30100">
    <property type="entry name" value="FATTY ACID/PHOSPHOLIPID SYNTHESIS PROTEIN PLSX"/>
    <property type="match status" value="1"/>
</dbReference>
<dbReference type="PANTHER" id="PTHR30100:SF1">
    <property type="entry name" value="PHOSPHATE ACYLTRANSFERASE"/>
    <property type="match status" value="1"/>
</dbReference>
<dbReference type="Pfam" id="PF02504">
    <property type="entry name" value="FA_synthesis"/>
    <property type="match status" value="1"/>
</dbReference>
<dbReference type="PIRSF" id="PIRSF002465">
    <property type="entry name" value="Phsphlp_syn_PlsX"/>
    <property type="match status" value="1"/>
</dbReference>
<dbReference type="SUPFAM" id="SSF53659">
    <property type="entry name" value="Isocitrate/Isopropylmalate dehydrogenase-like"/>
    <property type="match status" value="1"/>
</dbReference>
<proteinExistence type="inferred from homology"/>
<accession>Q8DKL5</accession>
<feature type="chain" id="PRO_0000189953" description="Phosphate acyltransferase">
    <location>
        <begin position="1"/>
        <end position="344"/>
    </location>
</feature>
<name>PLSX_THEVB</name>
<evidence type="ECO:0000255" key="1">
    <source>
        <dbReference type="HAMAP-Rule" id="MF_00019"/>
    </source>
</evidence>
<organism>
    <name type="scientific">Thermosynechococcus vestitus (strain NIES-2133 / IAM M-273 / BP-1)</name>
    <dbReference type="NCBI Taxonomy" id="197221"/>
    <lineage>
        <taxon>Bacteria</taxon>
        <taxon>Bacillati</taxon>
        <taxon>Cyanobacteriota</taxon>
        <taxon>Cyanophyceae</taxon>
        <taxon>Acaryochloridales</taxon>
        <taxon>Thermosynechococcaceae</taxon>
        <taxon>Thermosynechococcus</taxon>
    </lineage>
</organism>
<sequence>MQPMTRARIAVDAMGGDYAPDEIVAGALRASEELDADILLVGNPVPIQRYLDEHAPTAKPQIVAANDVVDMGEEPLSALKRKPKASINVAMDLVKAGAADAVVSAGHSGAAMAAALLRLGRLPGIDRPAIGAVLPTLLPGKSVLVLDVGANVDCRPKYLEQFAVMGSIYSQYVLDVENPKVGLLNIGEEDCKGNDLALKAHQLLRQNRQISFLGNAEGRDVLSGQFDVVVCDGFVGNVLLKFAESLGSVLVQILREELPRGWRGQLGTALLRPNLRKIKQRIDHAEHGGGLLLGVDGICIISHGSSQAPSIFNAIRLAKEAVDHRVSERIQACYQDAVAVEDQA</sequence>
<gene>
    <name evidence="1" type="primary">plsX</name>
    <name type="ordered locus">tlr0844</name>
</gene>